<accession>P23906</accession>
<comment type="function">
    <text>Specifically binds to the upstream regulatory region of type I IFN and IFN-inducible MHC class I genes (the interferon consensus sequence (ICS)) and represses those genes. Also acts as an activator for several genes including H4 and IL7. Constitutively binds to the ISRE promoter to activate IL7. Involved in cell cycle regulation through binding the site II (HiNF-M) promoter region of H4 and activating transcription during cell growth. Antagonizes IRF1 transcriptional activation.</text>
</comment>
<comment type="subunit">
    <text evidence="1">Interacts with BRD7, IRF2BP1 and IRF2BP2. Interacts with CREBBP in growing cells; the interaction acetylates IRF2 and regulates IRF2-dependent H4 promoter activity (By similarity).</text>
</comment>
<comment type="subcellular location">
    <subcellularLocation>
        <location>Nucleus</location>
    </subcellularLocation>
</comment>
<comment type="induction">
    <text>By viruses and IFN.</text>
</comment>
<comment type="PTM">
    <text evidence="1">Acetylated by CBP/ p300 during cell-growth. Acetylation on Lys-75 is required for stimulation of H4 promoter activity (By similarity).</text>
</comment>
<comment type="PTM">
    <text evidence="1">The major sites of sumoylation are Lys-137 and Lys-293. Sumoylation with SUMO1 increases its transcriptional repressor activity on IRF1 and diminishes its ability to activate ISRE and H4 promoter (By similarity).</text>
</comment>
<comment type="similarity">
    <text evidence="3">Belongs to the IRF family.</text>
</comment>
<proteinExistence type="evidence at protein level"/>
<protein>
    <recommendedName>
        <fullName>Interferon regulatory factor 2</fullName>
        <shortName>IRF-2</shortName>
    </recommendedName>
</protein>
<feature type="chain" id="PRO_0000154550" description="Interferon regulatory factor 2">
    <location>
        <begin position="1"/>
        <end position="349"/>
    </location>
</feature>
<feature type="DNA-binding region" description="IRF tryptophan pentad repeat" evidence="3">
    <location>
        <begin position="5"/>
        <end position="113"/>
    </location>
</feature>
<feature type="region of interest" description="Disordered" evidence="4">
    <location>
        <begin position="230"/>
        <end position="253"/>
    </location>
</feature>
<feature type="region of interest" description="Disordered" evidence="4">
    <location>
        <begin position="303"/>
        <end position="349"/>
    </location>
</feature>
<feature type="compositionally biased region" description="Polar residues" evidence="4">
    <location>
        <begin position="230"/>
        <end position="239"/>
    </location>
</feature>
<feature type="modified residue" description="N6-acetyllysine" evidence="2">
    <location>
        <position position="75"/>
    </location>
</feature>
<feature type="modified residue" description="N6-acetyllysine" evidence="2">
    <location>
        <position position="78"/>
    </location>
</feature>
<feature type="modified residue" description="Phosphoserine" evidence="2">
    <location>
        <position position="225"/>
    </location>
</feature>
<feature type="cross-link" description="Glycyl lysine isopeptide (Lys-Gly) (interchain with G-Cter in SUMO); alternate" evidence="1">
    <location>
        <position position="137"/>
    </location>
</feature>
<feature type="cross-link" description="Glycyl lysine isopeptide (Lys-Gly) (interchain with G-Cter in SUMO2); alternate" evidence="2">
    <location>
        <position position="137"/>
    </location>
</feature>
<feature type="cross-link" description="Glycyl lysine isopeptide (Lys-Gly) (interchain with G-Cter in SUMO)" evidence="1">
    <location>
        <position position="166"/>
    </location>
</feature>
<feature type="cross-link" description="Glycyl lysine isopeptide (Lys-Gly) (interchain with G-Cter in SUMO2)" evidence="2">
    <location>
        <position position="260"/>
    </location>
</feature>
<feature type="cross-link" description="Glycyl lysine isopeptide (Lys-Gly) (interchain with G-Cter in SUMO)" evidence="1">
    <location>
        <position position="293"/>
    </location>
</feature>
<feature type="helix" evidence="7">
    <location>
        <begin position="8"/>
        <end position="17"/>
    </location>
</feature>
<feature type="strand" evidence="7">
    <location>
        <begin position="25"/>
        <end position="28"/>
    </location>
</feature>
<feature type="turn" evidence="7">
    <location>
        <begin position="29"/>
        <end position="32"/>
    </location>
</feature>
<feature type="strand" evidence="7">
    <location>
        <begin position="33"/>
        <end position="37"/>
    </location>
</feature>
<feature type="strand" evidence="5">
    <location>
        <begin position="43"/>
        <end position="47"/>
    </location>
</feature>
<feature type="helix" evidence="7">
    <location>
        <begin position="48"/>
        <end position="51"/>
    </location>
</feature>
<feature type="helix" evidence="7">
    <location>
        <begin position="53"/>
        <end position="61"/>
    </location>
</feature>
<feature type="turn" evidence="7">
    <location>
        <begin position="67"/>
        <end position="69"/>
    </location>
</feature>
<feature type="helix" evidence="7">
    <location>
        <begin position="74"/>
        <end position="87"/>
    </location>
</feature>
<feature type="strand" evidence="7">
    <location>
        <begin position="91"/>
        <end position="93"/>
    </location>
</feature>
<feature type="turn" evidence="7">
    <location>
        <begin position="95"/>
        <end position="97"/>
    </location>
</feature>
<feature type="strand" evidence="6">
    <location>
        <begin position="98"/>
        <end position="100"/>
    </location>
</feature>
<feature type="strand" evidence="7">
    <location>
        <begin position="106"/>
        <end position="111"/>
    </location>
</feature>
<organism>
    <name type="scientific">Mus musculus</name>
    <name type="common">Mouse</name>
    <dbReference type="NCBI Taxonomy" id="10090"/>
    <lineage>
        <taxon>Eukaryota</taxon>
        <taxon>Metazoa</taxon>
        <taxon>Chordata</taxon>
        <taxon>Craniata</taxon>
        <taxon>Vertebrata</taxon>
        <taxon>Euteleostomi</taxon>
        <taxon>Mammalia</taxon>
        <taxon>Eutheria</taxon>
        <taxon>Euarchontoglires</taxon>
        <taxon>Glires</taxon>
        <taxon>Rodentia</taxon>
        <taxon>Myomorpha</taxon>
        <taxon>Muroidea</taxon>
        <taxon>Muridae</taxon>
        <taxon>Murinae</taxon>
        <taxon>Mus</taxon>
        <taxon>Mus</taxon>
    </lineage>
</organism>
<evidence type="ECO:0000250" key="1"/>
<evidence type="ECO:0000250" key="2">
    <source>
        <dbReference type="UniProtKB" id="P14316"/>
    </source>
</evidence>
<evidence type="ECO:0000255" key="3">
    <source>
        <dbReference type="PROSITE-ProRule" id="PRU00840"/>
    </source>
</evidence>
<evidence type="ECO:0000256" key="4">
    <source>
        <dbReference type="SAM" id="MobiDB-lite"/>
    </source>
</evidence>
<evidence type="ECO:0007829" key="5">
    <source>
        <dbReference type="PDB" id="1IRF"/>
    </source>
</evidence>
<evidence type="ECO:0007829" key="6">
    <source>
        <dbReference type="PDB" id="1IRG"/>
    </source>
</evidence>
<evidence type="ECO:0007829" key="7">
    <source>
        <dbReference type="PDB" id="2IRF"/>
    </source>
</evidence>
<dbReference type="EMBL" id="J03168">
    <property type="protein sequence ID" value="AAA39333.1"/>
    <property type="molecule type" value="mRNA"/>
</dbReference>
<dbReference type="CCDS" id="CCDS22295.1"/>
<dbReference type="RefSeq" id="NP_032417.3">
    <property type="nucleotide sequence ID" value="NM_008391.4"/>
</dbReference>
<dbReference type="RefSeq" id="XP_006509351.1">
    <property type="nucleotide sequence ID" value="XM_006509288.4"/>
</dbReference>
<dbReference type="RefSeq" id="XP_006509352.1">
    <property type="nucleotide sequence ID" value="XM_006509289.5"/>
</dbReference>
<dbReference type="PDB" id="1IRF">
    <property type="method" value="NMR"/>
    <property type="chains" value="A=2-113"/>
</dbReference>
<dbReference type="PDB" id="1IRG">
    <property type="method" value="NMR"/>
    <property type="chains" value="A=2-113"/>
</dbReference>
<dbReference type="PDB" id="2IRF">
    <property type="method" value="X-ray"/>
    <property type="resolution" value="2.20 A"/>
    <property type="chains" value="G/H/I/J/K/L=1-113"/>
</dbReference>
<dbReference type="PDBsum" id="1IRF"/>
<dbReference type="PDBsum" id="1IRG"/>
<dbReference type="PDBsum" id="2IRF"/>
<dbReference type="BMRB" id="P23906"/>
<dbReference type="SMR" id="P23906"/>
<dbReference type="BioGRID" id="200785">
    <property type="interactions" value="5"/>
</dbReference>
<dbReference type="FunCoup" id="P23906">
    <property type="interactions" value="2289"/>
</dbReference>
<dbReference type="STRING" id="10090.ENSMUSP00000034041"/>
<dbReference type="GlyGen" id="P23906">
    <property type="glycosylation" value="1 site"/>
</dbReference>
<dbReference type="iPTMnet" id="P23906"/>
<dbReference type="PhosphoSitePlus" id="P23906"/>
<dbReference type="jPOST" id="P23906"/>
<dbReference type="PaxDb" id="10090-ENSMUSP00000034041"/>
<dbReference type="PeptideAtlas" id="P23906"/>
<dbReference type="ProteomicsDB" id="267006"/>
<dbReference type="Pumba" id="P23906"/>
<dbReference type="Antibodypedia" id="17374">
    <property type="antibodies" value="539 antibodies from 44 providers"/>
</dbReference>
<dbReference type="DNASU" id="16363"/>
<dbReference type="Ensembl" id="ENSMUST00000034041.9">
    <property type="protein sequence ID" value="ENSMUSP00000034041.8"/>
    <property type="gene ID" value="ENSMUSG00000031627.10"/>
</dbReference>
<dbReference type="GeneID" id="16363"/>
<dbReference type="KEGG" id="mmu:16363"/>
<dbReference type="UCSC" id="uc009lqo.2">
    <property type="organism name" value="mouse"/>
</dbReference>
<dbReference type="AGR" id="MGI:96591"/>
<dbReference type="CTD" id="3660"/>
<dbReference type="MGI" id="MGI:96591">
    <property type="gene designation" value="Irf2"/>
</dbReference>
<dbReference type="VEuPathDB" id="HostDB:ENSMUSG00000031627"/>
<dbReference type="eggNOG" id="ENOG502QW7C">
    <property type="taxonomic scope" value="Eukaryota"/>
</dbReference>
<dbReference type="GeneTree" id="ENSGT00940000159063"/>
<dbReference type="HOGENOM" id="CLU_056386_0_0_1"/>
<dbReference type="InParanoid" id="P23906"/>
<dbReference type="OMA" id="SSWPPFA"/>
<dbReference type="OrthoDB" id="6538197at2759"/>
<dbReference type="PhylomeDB" id="P23906"/>
<dbReference type="TreeFam" id="TF328512"/>
<dbReference type="BioGRID-ORCS" id="16363">
    <property type="hits" value="12 hits in 81 CRISPR screens"/>
</dbReference>
<dbReference type="ChiTaRS" id="Irf2">
    <property type="organism name" value="mouse"/>
</dbReference>
<dbReference type="EvolutionaryTrace" id="P23906"/>
<dbReference type="PRO" id="PR:P23906"/>
<dbReference type="Proteomes" id="UP000000589">
    <property type="component" value="Chromosome 8"/>
</dbReference>
<dbReference type="RNAct" id="P23906">
    <property type="molecule type" value="protein"/>
</dbReference>
<dbReference type="Bgee" id="ENSMUSG00000031627">
    <property type="expression patterns" value="Expressed in granulocyte and 207 other cell types or tissues"/>
</dbReference>
<dbReference type="ExpressionAtlas" id="P23906">
    <property type="expression patterns" value="baseline and differential"/>
</dbReference>
<dbReference type="GO" id="GO:0005829">
    <property type="term" value="C:cytosol"/>
    <property type="evidence" value="ECO:0007669"/>
    <property type="project" value="Ensembl"/>
</dbReference>
<dbReference type="GO" id="GO:0005925">
    <property type="term" value="C:focal adhesion"/>
    <property type="evidence" value="ECO:0007669"/>
    <property type="project" value="Ensembl"/>
</dbReference>
<dbReference type="GO" id="GO:0005654">
    <property type="term" value="C:nucleoplasm"/>
    <property type="evidence" value="ECO:0007669"/>
    <property type="project" value="Ensembl"/>
</dbReference>
<dbReference type="GO" id="GO:0001228">
    <property type="term" value="F:DNA-binding transcription activator activity, RNA polymerase II-specific"/>
    <property type="evidence" value="ECO:0007669"/>
    <property type="project" value="Ensembl"/>
</dbReference>
<dbReference type="GO" id="GO:0003700">
    <property type="term" value="F:DNA-binding transcription factor activity"/>
    <property type="evidence" value="ECO:0000315"/>
    <property type="project" value="MGI"/>
</dbReference>
<dbReference type="GO" id="GO:0000977">
    <property type="term" value="F:RNA polymerase II transcription regulatory region sequence-specific DNA binding"/>
    <property type="evidence" value="ECO:0007669"/>
    <property type="project" value="Ensembl"/>
</dbReference>
<dbReference type="GO" id="GO:0051607">
    <property type="term" value="P:defense response to virus"/>
    <property type="evidence" value="ECO:0007669"/>
    <property type="project" value="Ensembl"/>
</dbReference>
<dbReference type="GO" id="GO:0006357">
    <property type="term" value="P:regulation of transcription by RNA polymerase II"/>
    <property type="evidence" value="ECO:0000315"/>
    <property type="project" value="MGI"/>
</dbReference>
<dbReference type="GO" id="GO:0034138">
    <property type="term" value="P:toll-like receptor 3 signaling pathway"/>
    <property type="evidence" value="ECO:0000266"/>
    <property type="project" value="MGI"/>
</dbReference>
<dbReference type="CDD" id="cd00103">
    <property type="entry name" value="IRF"/>
    <property type="match status" value="1"/>
</dbReference>
<dbReference type="FunFam" id="1.10.10.10:FF:000065">
    <property type="entry name" value="Interferon regulatory factor"/>
    <property type="match status" value="1"/>
</dbReference>
<dbReference type="Gene3D" id="1.10.10.10">
    <property type="entry name" value="Winged helix-like DNA-binding domain superfamily/Winged helix DNA-binding domain"/>
    <property type="match status" value="1"/>
</dbReference>
<dbReference type="InterPro" id="IPR019817">
    <property type="entry name" value="Interferon_reg_fac_CS"/>
</dbReference>
<dbReference type="InterPro" id="IPR001346">
    <property type="entry name" value="Interferon_reg_fact_DNA-bd_dom"/>
</dbReference>
<dbReference type="InterPro" id="IPR017431">
    <property type="entry name" value="IRF1/IRF2"/>
</dbReference>
<dbReference type="InterPro" id="IPR036388">
    <property type="entry name" value="WH-like_DNA-bd_sf"/>
</dbReference>
<dbReference type="InterPro" id="IPR036390">
    <property type="entry name" value="WH_DNA-bd_sf"/>
</dbReference>
<dbReference type="PANTHER" id="PTHR11949">
    <property type="entry name" value="INTERFERON REGULATORY FACTOR"/>
    <property type="match status" value="1"/>
</dbReference>
<dbReference type="PANTHER" id="PTHR11949:SF22">
    <property type="entry name" value="INTERFERON REGULATORY FACTOR 2"/>
    <property type="match status" value="1"/>
</dbReference>
<dbReference type="Pfam" id="PF00605">
    <property type="entry name" value="IRF"/>
    <property type="match status" value="1"/>
</dbReference>
<dbReference type="PIRSF" id="PIRSF038196">
    <property type="entry name" value="IFN_RF1/2"/>
    <property type="match status" value="1"/>
</dbReference>
<dbReference type="PRINTS" id="PR00267">
    <property type="entry name" value="INTFRNREGFCT"/>
</dbReference>
<dbReference type="SMART" id="SM00348">
    <property type="entry name" value="IRF"/>
    <property type="match status" value="1"/>
</dbReference>
<dbReference type="SUPFAM" id="SSF46785">
    <property type="entry name" value="Winged helix' DNA-binding domain"/>
    <property type="match status" value="1"/>
</dbReference>
<dbReference type="PROSITE" id="PS00601">
    <property type="entry name" value="IRF_1"/>
    <property type="match status" value="1"/>
</dbReference>
<dbReference type="PROSITE" id="PS51507">
    <property type="entry name" value="IRF_2"/>
    <property type="match status" value="1"/>
</dbReference>
<keyword id="KW-0002">3D-structure</keyword>
<keyword id="KW-0007">Acetylation</keyword>
<keyword id="KW-0010">Activator</keyword>
<keyword id="KW-0903">Direct protein sequencing</keyword>
<keyword id="KW-0238">DNA-binding</keyword>
<keyword id="KW-1017">Isopeptide bond</keyword>
<keyword id="KW-0539">Nucleus</keyword>
<keyword id="KW-0597">Phosphoprotein</keyword>
<keyword id="KW-1185">Reference proteome</keyword>
<keyword id="KW-0678">Repressor</keyword>
<keyword id="KW-0804">Transcription</keyword>
<keyword id="KW-0805">Transcription regulation</keyword>
<keyword id="KW-0832">Ubl conjugation</keyword>
<name>IRF2_MOUSE</name>
<reference key="1">
    <citation type="journal article" date="1989" name="Cell">
        <title>Structurally similar but functionally distinct factors, IRF-1 and IRF-2, bind to the same regulatory elements of IFN and IFN-inducible genes.</title>
        <authorList>
            <person name="Harada H."/>
            <person name="Fujita T."/>
            <person name="Miyamoto M."/>
            <person name="Kimura Y."/>
            <person name="Maruyama M."/>
            <person name="Furia A."/>
            <person name="Miyata T."/>
            <person name="Taniguchi T."/>
        </authorList>
    </citation>
    <scope>NUCLEOTIDE SEQUENCE [MRNA]</scope>
</reference>
<reference key="2">
    <citation type="submission" date="2009-01" db="UniProtKB">
        <authorList>
            <person name="Lubec G."/>
            <person name="Sunyer B."/>
            <person name="Chen W.-Q."/>
        </authorList>
    </citation>
    <scope>PROTEIN SEQUENCE OF 108-120</scope>
    <scope>IDENTIFICATION BY MASS SPECTROMETRY</scope>
    <source>
        <strain>OF1</strain>
        <tissue>Hippocampus</tissue>
    </source>
</reference>
<reference key="3">
    <citation type="journal article" date="1998" name="Structure">
        <title>Solution structure of the IRF-2 DNA-binding domain: a novel subgroup of the winged helix-turn-helix family.</title>
        <authorList>
            <person name="Furui J."/>
            <person name="Uegaki K."/>
            <person name="Yamazaki T."/>
            <person name="Shirakawa M."/>
            <person name="Swindells M.B."/>
            <person name="Harada H."/>
            <person name="Taniguchi T."/>
            <person name="Kyogoku Y."/>
        </authorList>
    </citation>
    <scope>STRUCTURE BY NMR OF 2-113</scope>
</reference>
<reference key="4">
    <citation type="journal article" date="1999" name="EMBO J.">
        <title>Crystal structure of an IRF-DNA complex reveals novel DNA recognition and cooperative binding to a tandem repeat of core sequences.</title>
        <authorList>
            <person name="Fujii Y."/>
            <person name="Shimizu T."/>
            <person name="Kusumoto M."/>
            <person name="Kyogoku Y."/>
            <person name="Taniguchi T."/>
            <person name="Hakoshima T."/>
        </authorList>
    </citation>
    <scope>X-RAY CRYSTALLOGRAPHY (2.2 ANGSTROMS) OF 1-113</scope>
</reference>
<gene>
    <name type="primary">Irf2</name>
</gene>
<sequence>MPVERMRMRPWLEEQINSNTIPGLKWLNKEKKIFQIPWMHAARHGWDVEKDAPLFRNWAIHTGKHQPGIDKPDPKTWKANFRCAMNSLPDIEEVKDRSIKKGNNAFRVYRMLPLSERPSKKGKKPKTEKEERVKHIKQEPVESSLGLSNGVSGFSPEYAVLTSAIKNEVDSTVNIIVVGQSHLDSNIEDQEIVTNPPDICQVVEVTTESDDQPVSMSELYPLQISPVSSYAESETTDSVASDEENAEGRPHWRKRSIEGKQYLSNMGTRNTYLLPSMATFVTSNKPDLQVTIKEDSCPMPYNSSWPPFTDLPLPAPVTPTPSSSRPDRETRASVIKKTSDITQARVKSC</sequence>